<comment type="function">
    <text evidence="1">One of the primary rRNA binding proteins, this protein initially binds near the 5'-end of the 23S rRNA. It is important during the early stages of 50S assembly. It makes multiple contacts with different domains of the 23S rRNA in the assembled 50S subunit and ribosome.</text>
</comment>
<comment type="function">
    <text evidence="1">Forms part of the polypeptide exit tunnel.</text>
</comment>
<comment type="subunit">
    <text evidence="1">Part of the 50S ribosomal subunit.</text>
</comment>
<comment type="similarity">
    <text evidence="1">Belongs to the universal ribosomal protein uL4 family.</text>
</comment>
<feature type="chain" id="PRO_0000242446" description="Large ribosomal subunit protein uL4">
    <location>
        <begin position="1"/>
        <end position="207"/>
    </location>
</feature>
<feature type="region of interest" description="Disordered" evidence="2">
    <location>
        <begin position="49"/>
        <end position="78"/>
    </location>
</feature>
<evidence type="ECO:0000255" key="1">
    <source>
        <dbReference type="HAMAP-Rule" id="MF_01328"/>
    </source>
</evidence>
<evidence type="ECO:0000256" key="2">
    <source>
        <dbReference type="SAM" id="MobiDB-lite"/>
    </source>
</evidence>
<evidence type="ECO:0000305" key="3"/>
<dbReference type="EMBL" id="CP000024">
    <property type="protein sequence ID" value="AAV63446.1"/>
    <property type="molecule type" value="Genomic_DNA"/>
</dbReference>
<dbReference type="RefSeq" id="WP_002885795.1">
    <property type="nucleotide sequence ID" value="NC_006449.1"/>
</dbReference>
<dbReference type="SMR" id="Q5LXR2"/>
<dbReference type="GeneID" id="66899661"/>
<dbReference type="KEGG" id="stc:str1933"/>
<dbReference type="HOGENOM" id="CLU_041575_5_2_9"/>
<dbReference type="GO" id="GO:1990904">
    <property type="term" value="C:ribonucleoprotein complex"/>
    <property type="evidence" value="ECO:0007669"/>
    <property type="project" value="UniProtKB-KW"/>
</dbReference>
<dbReference type="GO" id="GO:0005840">
    <property type="term" value="C:ribosome"/>
    <property type="evidence" value="ECO:0007669"/>
    <property type="project" value="UniProtKB-KW"/>
</dbReference>
<dbReference type="GO" id="GO:0019843">
    <property type="term" value="F:rRNA binding"/>
    <property type="evidence" value="ECO:0007669"/>
    <property type="project" value="UniProtKB-UniRule"/>
</dbReference>
<dbReference type="GO" id="GO:0003735">
    <property type="term" value="F:structural constituent of ribosome"/>
    <property type="evidence" value="ECO:0007669"/>
    <property type="project" value="InterPro"/>
</dbReference>
<dbReference type="GO" id="GO:0006412">
    <property type="term" value="P:translation"/>
    <property type="evidence" value="ECO:0007669"/>
    <property type="project" value="UniProtKB-UniRule"/>
</dbReference>
<dbReference type="FunFam" id="3.40.1370.10:FF:000003">
    <property type="entry name" value="50S ribosomal protein L4"/>
    <property type="match status" value="1"/>
</dbReference>
<dbReference type="Gene3D" id="3.40.1370.10">
    <property type="match status" value="1"/>
</dbReference>
<dbReference type="HAMAP" id="MF_01328_B">
    <property type="entry name" value="Ribosomal_uL4_B"/>
    <property type="match status" value="1"/>
</dbReference>
<dbReference type="InterPro" id="IPR002136">
    <property type="entry name" value="Ribosomal_uL4"/>
</dbReference>
<dbReference type="InterPro" id="IPR013005">
    <property type="entry name" value="Ribosomal_uL4-like"/>
</dbReference>
<dbReference type="InterPro" id="IPR023574">
    <property type="entry name" value="Ribosomal_uL4_dom_sf"/>
</dbReference>
<dbReference type="NCBIfam" id="TIGR03953">
    <property type="entry name" value="rplD_bact"/>
    <property type="match status" value="1"/>
</dbReference>
<dbReference type="PANTHER" id="PTHR10746">
    <property type="entry name" value="50S RIBOSOMAL PROTEIN L4"/>
    <property type="match status" value="1"/>
</dbReference>
<dbReference type="PANTHER" id="PTHR10746:SF6">
    <property type="entry name" value="LARGE RIBOSOMAL SUBUNIT PROTEIN UL4M"/>
    <property type="match status" value="1"/>
</dbReference>
<dbReference type="Pfam" id="PF00573">
    <property type="entry name" value="Ribosomal_L4"/>
    <property type="match status" value="1"/>
</dbReference>
<dbReference type="SUPFAM" id="SSF52166">
    <property type="entry name" value="Ribosomal protein L4"/>
    <property type="match status" value="1"/>
</dbReference>
<sequence length="207" mass="22168">MANVKLFDQTGKEVSTVELNDAIFGIEPNESVVFDVVISQRASLRQGTHAVKNRSAVSGGGRKPWRQKGTGRARQGSIRSPQWRGGGVVFGPTPRSYGYKLPQKVRRLALKSVYSAKVAEDKFVAVEALSFAAPKTAEFANVLSALSIDSKVLVIVEEGNKFAELSARNLANVTVATPATASVLDIVNADKLLVTKEAISSIEEVLA</sequence>
<organism>
    <name type="scientific">Streptococcus thermophilus (strain CNRZ 1066)</name>
    <dbReference type="NCBI Taxonomy" id="299768"/>
    <lineage>
        <taxon>Bacteria</taxon>
        <taxon>Bacillati</taxon>
        <taxon>Bacillota</taxon>
        <taxon>Bacilli</taxon>
        <taxon>Lactobacillales</taxon>
        <taxon>Streptococcaceae</taxon>
        <taxon>Streptococcus</taxon>
    </lineage>
</organism>
<accession>Q5LXR2</accession>
<proteinExistence type="inferred from homology"/>
<keyword id="KW-0687">Ribonucleoprotein</keyword>
<keyword id="KW-0689">Ribosomal protein</keyword>
<keyword id="KW-0694">RNA-binding</keyword>
<keyword id="KW-0699">rRNA-binding</keyword>
<gene>
    <name evidence="1" type="primary">rplD</name>
    <name type="ordered locus">str1933</name>
</gene>
<reference key="1">
    <citation type="journal article" date="2004" name="Nat. Biotechnol.">
        <title>Complete sequence and comparative genome analysis of the dairy bacterium Streptococcus thermophilus.</title>
        <authorList>
            <person name="Bolotin A."/>
            <person name="Quinquis B."/>
            <person name="Renault P."/>
            <person name="Sorokin A."/>
            <person name="Ehrlich S.D."/>
            <person name="Kulakauskas S."/>
            <person name="Lapidus A."/>
            <person name="Goltsman E."/>
            <person name="Mazur M."/>
            <person name="Pusch G.D."/>
            <person name="Fonstein M."/>
            <person name="Overbeek R."/>
            <person name="Kyprides N."/>
            <person name="Purnelle B."/>
            <person name="Prozzi D."/>
            <person name="Ngui K."/>
            <person name="Masuy D."/>
            <person name="Hancy F."/>
            <person name="Burteau S."/>
            <person name="Boutry M."/>
            <person name="Delcour J."/>
            <person name="Goffeau A."/>
            <person name="Hols P."/>
        </authorList>
    </citation>
    <scope>NUCLEOTIDE SEQUENCE [LARGE SCALE GENOMIC DNA]</scope>
    <source>
        <strain>CNRZ 1066</strain>
    </source>
</reference>
<name>RL4_STRT1</name>
<protein>
    <recommendedName>
        <fullName evidence="1">Large ribosomal subunit protein uL4</fullName>
    </recommendedName>
    <alternativeName>
        <fullName evidence="3">50S ribosomal protein L4</fullName>
    </alternativeName>
</protein>